<keyword id="KW-0474">Menaquinone biosynthesis</keyword>
<keyword id="KW-0489">Methyltransferase</keyword>
<keyword id="KW-1185">Reference proteome</keyword>
<keyword id="KW-0949">S-adenosyl-L-methionine</keyword>
<keyword id="KW-0808">Transferase</keyword>
<keyword id="KW-0831">Ubiquinone biosynthesis</keyword>
<feature type="chain" id="PRO_0000193301" description="Ubiquinone/menaquinone biosynthesis C-methyltransferase UbiE">
    <location>
        <begin position="1"/>
        <end position="245"/>
    </location>
</feature>
<feature type="binding site" evidence="1">
    <location>
        <position position="71"/>
    </location>
    <ligand>
        <name>S-adenosyl-L-methionine</name>
        <dbReference type="ChEBI" id="CHEBI:59789"/>
    </ligand>
</feature>
<feature type="binding site" evidence="1">
    <location>
        <position position="92"/>
    </location>
    <ligand>
        <name>S-adenosyl-L-methionine</name>
        <dbReference type="ChEBI" id="CHEBI:59789"/>
    </ligand>
</feature>
<feature type="binding site" evidence="1">
    <location>
        <begin position="118"/>
        <end position="119"/>
    </location>
    <ligand>
        <name>S-adenosyl-L-methionine</name>
        <dbReference type="ChEBI" id="CHEBI:59789"/>
    </ligand>
</feature>
<reference key="1">
    <citation type="journal article" date="2000" name="Science">
        <title>Complete genome sequence of Neisseria meningitidis serogroup B strain MC58.</title>
        <authorList>
            <person name="Tettelin H."/>
            <person name="Saunders N.J."/>
            <person name="Heidelberg J.F."/>
            <person name="Jeffries A.C."/>
            <person name="Nelson K.E."/>
            <person name="Eisen J.A."/>
            <person name="Ketchum K.A."/>
            <person name="Hood D.W."/>
            <person name="Peden J.F."/>
            <person name="Dodson R.J."/>
            <person name="Nelson W.C."/>
            <person name="Gwinn M.L."/>
            <person name="DeBoy R.T."/>
            <person name="Peterson J.D."/>
            <person name="Hickey E.K."/>
            <person name="Haft D.H."/>
            <person name="Salzberg S.L."/>
            <person name="White O."/>
            <person name="Fleischmann R.D."/>
            <person name="Dougherty B.A."/>
            <person name="Mason T.M."/>
            <person name="Ciecko A."/>
            <person name="Parksey D.S."/>
            <person name="Blair E."/>
            <person name="Cittone H."/>
            <person name="Clark E.B."/>
            <person name="Cotton M.D."/>
            <person name="Utterback T.R."/>
            <person name="Khouri H.M."/>
            <person name="Qin H."/>
            <person name="Vamathevan J.J."/>
            <person name="Gill J."/>
            <person name="Scarlato V."/>
            <person name="Masignani V."/>
            <person name="Pizza M."/>
            <person name="Grandi G."/>
            <person name="Sun L."/>
            <person name="Smith H.O."/>
            <person name="Fraser C.M."/>
            <person name="Moxon E.R."/>
            <person name="Rappuoli R."/>
            <person name="Venter J.C."/>
        </authorList>
    </citation>
    <scope>NUCLEOTIDE SEQUENCE [LARGE SCALE GENOMIC DNA]</scope>
    <source>
        <strain>ATCC BAA-335 / MC58</strain>
    </source>
</reference>
<protein>
    <recommendedName>
        <fullName evidence="1">Ubiquinone/menaquinone biosynthesis C-methyltransferase UbiE</fullName>
        <ecNumber evidence="1">2.1.1.163</ecNumber>
        <ecNumber evidence="1">2.1.1.201</ecNumber>
    </recommendedName>
    <alternativeName>
        <fullName evidence="1">2-methoxy-6-polyprenyl-1,4-benzoquinol methylase</fullName>
    </alternativeName>
    <alternativeName>
        <fullName evidence="1">Demethylmenaquinone methyltransferase</fullName>
    </alternativeName>
</protein>
<proteinExistence type="inferred from homology"/>
<gene>
    <name evidence="1" type="primary">ubiE</name>
    <name type="ordered locus">NMB0743</name>
</gene>
<organism>
    <name type="scientific">Neisseria meningitidis serogroup B (strain ATCC BAA-335 / MC58)</name>
    <dbReference type="NCBI Taxonomy" id="122586"/>
    <lineage>
        <taxon>Bacteria</taxon>
        <taxon>Pseudomonadati</taxon>
        <taxon>Pseudomonadota</taxon>
        <taxon>Betaproteobacteria</taxon>
        <taxon>Neisseriales</taxon>
        <taxon>Neisseriaceae</taxon>
        <taxon>Neisseria</taxon>
    </lineage>
</organism>
<comment type="function">
    <text evidence="1">Methyltransferase required for the conversion of demethylmenaquinol (DMKH2) to menaquinol (MKH2) and the conversion of 2-polyprenyl-6-methoxy-1,4-benzoquinol (DDMQH2) to 2-polyprenyl-3-methyl-6-methoxy-1,4-benzoquinol (DMQH2).</text>
</comment>
<comment type="catalytic activity">
    <reaction evidence="1">
        <text>a 2-demethylmenaquinol + S-adenosyl-L-methionine = a menaquinol + S-adenosyl-L-homocysteine + H(+)</text>
        <dbReference type="Rhea" id="RHEA:42640"/>
        <dbReference type="Rhea" id="RHEA-COMP:9539"/>
        <dbReference type="Rhea" id="RHEA-COMP:9563"/>
        <dbReference type="ChEBI" id="CHEBI:15378"/>
        <dbReference type="ChEBI" id="CHEBI:18151"/>
        <dbReference type="ChEBI" id="CHEBI:55437"/>
        <dbReference type="ChEBI" id="CHEBI:57856"/>
        <dbReference type="ChEBI" id="CHEBI:59789"/>
        <dbReference type="EC" id="2.1.1.163"/>
    </reaction>
</comment>
<comment type="catalytic activity">
    <reaction evidence="1">
        <text>a 2-methoxy-6-(all-trans-polyprenyl)benzene-1,4-diol + S-adenosyl-L-methionine = a 5-methoxy-2-methyl-3-(all-trans-polyprenyl)benzene-1,4-diol + S-adenosyl-L-homocysteine + H(+)</text>
        <dbReference type="Rhea" id="RHEA:28286"/>
        <dbReference type="Rhea" id="RHEA-COMP:10858"/>
        <dbReference type="Rhea" id="RHEA-COMP:10859"/>
        <dbReference type="ChEBI" id="CHEBI:15378"/>
        <dbReference type="ChEBI" id="CHEBI:57856"/>
        <dbReference type="ChEBI" id="CHEBI:59789"/>
        <dbReference type="ChEBI" id="CHEBI:84166"/>
        <dbReference type="ChEBI" id="CHEBI:84167"/>
        <dbReference type="EC" id="2.1.1.201"/>
    </reaction>
</comment>
<comment type="pathway">
    <text evidence="1">Quinol/quinone metabolism; menaquinone biosynthesis; menaquinol from 1,4-dihydroxy-2-naphthoate: step 2/2.</text>
</comment>
<comment type="pathway">
    <text evidence="1">Cofactor biosynthesis; ubiquinone biosynthesis.</text>
</comment>
<comment type="similarity">
    <text evidence="1">Belongs to the class I-like SAM-binding methyltransferase superfamily. MenG/UbiE family.</text>
</comment>
<dbReference type="EC" id="2.1.1.163" evidence="1"/>
<dbReference type="EC" id="2.1.1.201" evidence="1"/>
<dbReference type="EMBL" id="AE002098">
    <property type="protein sequence ID" value="AAF41156.1"/>
    <property type="molecule type" value="Genomic_DNA"/>
</dbReference>
<dbReference type="PIR" id="F81162">
    <property type="entry name" value="F81162"/>
</dbReference>
<dbReference type="RefSeq" id="NP_273785.1">
    <property type="nucleotide sequence ID" value="NC_003112.2"/>
</dbReference>
<dbReference type="RefSeq" id="WP_002217627.1">
    <property type="nucleotide sequence ID" value="NC_003112.2"/>
</dbReference>
<dbReference type="SMR" id="Q9K075"/>
<dbReference type="FunCoup" id="Q9K075">
    <property type="interactions" value="427"/>
</dbReference>
<dbReference type="STRING" id="122586.NMB0743"/>
<dbReference type="PaxDb" id="122586-NMB0743"/>
<dbReference type="KEGG" id="nme:NMB0743"/>
<dbReference type="PATRIC" id="fig|122586.8.peg.947"/>
<dbReference type="HOGENOM" id="CLU_037990_0_0_4"/>
<dbReference type="InParanoid" id="Q9K075"/>
<dbReference type="OrthoDB" id="9808140at2"/>
<dbReference type="UniPathway" id="UPA00079">
    <property type="reaction ID" value="UER00169"/>
</dbReference>
<dbReference type="UniPathway" id="UPA00232"/>
<dbReference type="Proteomes" id="UP000000425">
    <property type="component" value="Chromosome"/>
</dbReference>
<dbReference type="GO" id="GO:0008425">
    <property type="term" value="F:2-methoxy-6-polyprenyl-1,4-benzoquinol methyltransferase activity"/>
    <property type="evidence" value="ECO:0000318"/>
    <property type="project" value="GO_Central"/>
</dbReference>
<dbReference type="GO" id="GO:0043770">
    <property type="term" value="F:demethylmenaquinone methyltransferase activity"/>
    <property type="evidence" value="ECO:0007669"/>
    <property type="project" value="UniProtKB-UniRule"/>
</dbReference>
<dbReference type="GO" id="GO:0009060">
    <property type="term" value="P:aerobic respiration"/>
    <property type="evidence" value="ECO:0007669"/>
    <property type="project" value="UniProtKB-UniRule"/>
</dbReference>
<dbReference type="GO" id="GO:0009234">
    <property type="term" value="P:menaquinone biosynthetic process"/>
    <property type="evidence" value="ECO:0007669"/>
    <property type="project" value="UniProtKB-UniRule"/>
</dbReference>
<dbReference type="GO" id="GO:0032259">
    <property type="term" value="P:methylation"/>
    <property type="evidence" value="ECO:0007669"/>
    <property type="project" value="UniProtKB-KW"/>
</dbReference>
<dbReference type="GO" id="GO:0006744">
    <property type="term" value="P:ubiquinone biosynthetic process"/>
    <property type="evidence" value="ECO:0000318"/>
    <property type="project" value="GO_Central"/>
</dbReference>
<dbReference type="CDD" id="cd02440">
    <property type="entry name" value="AdoMet_MTases"/>
    <property type="match status" value="1"/>
</dbReference>
<dbReference type="Gene3D" id="3.40.50.150">
    <property type="entry name" value="Vaccinia Virus protein VP39"/>
    <property type="match status" value="1"/>
</dbReference>
<dbReference type="HAMAP" id="MF_01813">
    <property type="entry name" value="MenG_UbiE_methyltr"/>
    <property type="match status" value="1"/>
</dbReference>
<dbReference type="InterPro" id="IPR029063">
    <property type="entry name" value="SAM-dependent_MTases_sf"/>
</dbReference>
<dbReference type="InterPro" id="IPR004033">
    <property type="entry name" value="UbiE/COQ5_MeTrFase"/>
</dbReference>
<dbReference type="InterPro" id="IPR023576">
    <property type="entry name" value="UbiE/COQ5_MeTrFase_CS"/>
</dbReference>
<dbReference type="NCBIfam" id="TIGR01934">
    <property type="entry name" value="MenG_MenH_UbiE"/>
    <property type="match status" value="1"/>
</dbReference>
<dbReference type="NCBIfam" id="NF001240">
    <property type="entry name" value="PRK00216.1-1"/>
    <property type="match status" value="1"/>
</dbReference>
<dbReference type="NCBIfam" id="NF001244">
    <property type="entry name" value="PRK00216.1-5"/>
    <property type="match status" value="1"/>
</dbReference>
<dbReference type="PANTHER" id="PTHR43591:SF24">
    <property type="entry name" value="2-METHOXY-6-POLYPRENYL-1,4-BENZOQUINOL METHYLASE, MITOCHONDRIAL"/>
    <property type="match status" value="1"/>
</dbReference>
<dbReference type="PANTHER" id="PTHR43591">
    <property type="entry name" value="METHYLTRANSFERASE"/>
    <property type="match status" value="1"/>
</dbReference>
<dbReference type="Pfam" id="PF01209">
    <property type="entry name" value="Ubie_methyltran"/>
    <property type="match status" value="1"/>
</dbReference>
<dbReference type="SUPFAM" id="SSF53335">
    <property type="entry name" value="S-adenosyl-L-methionine-dependent methyltransferases"/>
    <property type="match status" value="1"/>
</dbReference>
<dbReference type="PROSITE" id="PS51608">
    <property type="entry name" value="SAM_MT_UBIE"/>
    <property type="match status" value="1"/>
</dbReference>
<dbReference type="PROSITE" id="PS01183">
    <property type="entry name" value="UBIE_1"/>
    <property type="match status" value="1"/>
</dbReference>
<dbReference type="PROSITE" id="PS01184">
    <property type="entry name" value="UBIE_2"/>
    <property type="match status" value="1"/>
</dbReference>
<name>UBIE_NEIMB</name>
<sequence>MGGQKTHFGFSTVNEDEKAGKVAEVFHSVAKNYDIMNDVMSAGLHRVWKHFTINTAHLKKGDKVLDIAGGTGDLSRGWAKRVGKEGEVWLTDINSSMLTVGRDRLLNEGMILPVSLADAEKLPFPDNYFNLVSVAFGLRNMTHKDAALKEMYRVLKPGGTLLVLEFSKIYKPLEGAYDFYSFKLLPVMGRLIAKDAESYQYLAESIRMHPDQETLKQMMLDAGFDSVDYHNMSAGIVALHKGVKF</sequence>
<evidence type="ECO:0000255" key="1">
    <source>
        <dbReference type="HAMAP-Rule" id="MF_01813"/>
    </source>
</evidence>
<accession>Q9K075</accession>